<name>DUT_SHEPC</name>
<reference key="1">
    <citation type="submission" date="2007-04" db="EMBL/GenBank/DDBJ databases">
        <title>Complete sequence of Shewanella putrefaciens CN-32.</title>
        <authorList>
            <consortium name="US DOE Joint Genome Institute"/>
            <person name="Copeland A."/>
            <person name="Lucas S."/>
            <person name="Lapidus A."/>
            <person name="Barry K."/>
            <person name="Detter J.C."/>
            <person name="Glavina del Rio T."/>
            <person name="Hammon N."/>
            <person name="Israni S."/>
            <person name="Dalin E."/>
            <person name="Tice H."/>
            <person name="Pitluck S."/>
            <person name="Chain P."/>
            <person name="Malfatti S."/>
            <person name="Shin M."/>
            <person name="Vergez L."/>
            <person name="Schmutz J."/>
            <person name="Larimer F."/>
            <person name="Land M."/>
            <person name="Hauser L."/>
            <person name="Kyrpides N."/>
            <person name="Mikhailova N."/>
            <person name="Romine M.F."/>
            <person name="Fredrickson J."/>
            <person name="Tiedje J."/>
            <person name="Richardson P."/>
        </authorList>
    </citation>
    <scope>NUCLEOTIDE SEQUENCE [LARGE SCALE GENOMIC DNA]</scope>
    <source>
        <strain>CN-32 / ATCC BAA-453</strain>
    </source>
</reference>
<evidence type="ECO:0000255" key="1">
    <source>
        <dbReference type="HAMAP-Rule" id="MF_00116"/>
    </source>
</evidence>
<feature type="chain" id="PRO_1000015517" description="Deoxyuridine 5'-triphosphate nucleotidohydrolase">
    <location>
        <begin position="1"/>
        <end position="152"/>
    </location>
</feature>
<feature type="binding site" evidence="1">
    <location>
        <begin position="71"/>
        <end position="73"/>
    </location>
    <ligand>
        <name>substrate</name>
    </ligand>
</feature>
<feature type="binding site" evidence="1">
    <location>
        <position position="84"/>
    </location>
    <ligand>
        <name>substrate</name>
    </ligand>
</feature>
<feature type="binding site" evidence="1">
    <location>
        <begin position="88"/>
        <end position="90"/>
    </location>
    <ligand>
        <name>substrate</name>
    </ligand>
</feature>
<feature type="binding site" evidence="1">
    <location>
        <position position="98"/>
    </location>
    <ligand>
        <name>substrate</name>
    </ligand>
</feature>
<dbReference type="EC" id="3.6.1.23" evidence="1"/>
<dbReference type="EMBL" id="CP000681">
    <property type="protein sequence ID" value="ABP74192.1"/>
    <property type="molecule type" value="Genomic_DNA"/>
</dbReference>
<dbReference type="SMR" id="A4Y2K9"/>
<dbReference type="STRING" id="319224.Sputcn32_0460"/>
<dbReference type="KEGG" id="spc:Sputcn32_0460"/>
<dbReference type="eggNOG" id="COG0756">
    <property type="taxonomic scope" value="Bacteria"/>
</dbReference>
<dbReference type="HOGENOM" id="CLU_068508_1_1_6"/>
<dbReference type="UniPathway" id="UPA00610">
    <property type="reaction ID" value="UER00666"/>
</dbReference>
<dbReference type="GO" id="GO:0004170">
    <property type="term" value="F:dUTP diphosphatase activity"/>
    <property type="evidence" value="ECO:0007669"/>
    <property type="project" value="UniProtKB-UniRule"/>
</dbReference>
<dbReference type="GO" id="GO:0000287">
    <property type="term" value="F:magnesium ion binding"/>
    <property type="evidence" value="ECO:0007669"/>
    <property type="project" value="UniProtKB-UniRule"/>
</dbReference>
<dbReference type="GO" id="GO:0006226">
    <property type="term" value="P:dUMP biosynthetic process"/>
    <property type="evidence" value="ECO:0007669"/>
    <property type="project" value="UniProtKB-UniRule"/>
</dbReference>
<dbReference type="GO" id="GO:0046081">
    <property type="term" value="P:dUTP catabolic process"/>
    <property type="evidence" value="ECO:0007669"/>
    <property type="project" value="InterPro"/>
</dbReference>
<dbReference type="CDD" id="cd07557">
    <property type="entry name" value="trimeric_dUTPase"/>
    <property type="match status" value="1"/>
</dbReference>
<dbReference type="FunFam" id="2.70.40.10:FF:000002">
    <property type="entry name" value="dUTP diphosphatase"/>
    <property type="match status" value="1"/>
</dbReference>
<dbReference type="Gene3D" id="2.70.40.10">
    <property type="match status" value="1"/>
</dbReference>
<dbReference type="HAMAP" id="MF_00116">
    <property type="entry name" value="dUTPase_bact"/>
    <property type="match status" value="1"/>
</dbReference>
<dbReference type="InterPro" id="IPR008181">
    <property type="entry name" value="dUTPase"/>
</dbReference>
<dbReference type="InterPro" id="IPR029054">
    <property type="entry name" value="dUTPase-like"/>
</dbReference>
<dbReference type="InterPro" id="IPR036157">
    <property type="entry name" value="dUTPase-like_sf"/>
</dbReference>
<dbReference type="InterPro" id="IPR033704">
    <property type="entry name" value="dUTPase_trimeric"/>
</dbReference>
<dbReference type="NCBIfam" id="TIGR00576">
    <property type="entry name" value="dut"/>
    <property type="match status" value="1"/>
</dbReference>
<dbReference type="NCBIfam" id="NF001862">
    <property type="entry name" value="PRK00601.1"/>
    <property type="match status" value="1"/>
</dbReference>
<dbReference type="PANTHER" id="PTHR11241">
    <property type="entry name" value="DEOXYURIDINE 5'-TRIPHOSPHATE NUCLEOTIDOHYDROLASE"/>
    <property type="match status" value="1"/>
</dbReference>
<dbReference type="PANTHER" id="PTHR11241:SF0">
    <property type="entry name" value="DEOXYURIDINE 5'-TRIPHOSPHATE NUCLEOTIDOHYDROLASE"/>
    <property type="match status" value="1"/>
</dbReference>
<dbReference type="Pfam" id="PF00692">
    <property type="entry name" value="dUTPase"/>
    <property type="match status" value="1"/>
</dbReference>
<dbReference type="SUPFAM" id="SSF51283">
    <property type="entry name" value="dUTPase-like"/>
    <property type="match status" value="1"/>
</dbReference>
<protein>
    <recommendedName>
        <fullName evidence="1">Deoxyuridine 5'-triphosphate nucleotidohydrolase</fullName>
        <shortName evidence="1">dUTPase</shortName>
        <ecNumber evidence="1">3.6.1.23</ecNumber>
    </recommendedName>
    <alternativeName>
        <fullName evidence="1">dUTP pyrophosphatase</fullName>
    </alternativeName>
</protein>
<organism>
    <name type="scientific">Shewanella putrefaciens (strain CN-32 / ATCC BAA-453)</name>
    <dbReference type="NCBI Taxonomy" id="319224"/>
    <lineage>
        <taxon>Bacteria</taxon>
        <taxon>Pseudomonadati</taxon>
        <taxon>Pseudomonadota</taxon>
        <taxon>Gammaproteobacteria</taxon>
        <taxon>Alteromonadales</taxon>
        <taxon>Shewanellaceae</taxon>
        <taxon>Shewanella</taxon>
    </lineage>
</organism>
<gene>
    <name evidence="1" type="primary">dut</name>
    <name type="ordered locus">Sputcn32_0460</name>
</gene>
<sequence>MKTPIELKILDSRIGSEFPLPAYATLGSAGMDLRAMIDTTMTIAPGETQLIPTGIAIHVADPGLAAVILPRSGLGHKHGIVLGNLVGLIDSDYQGPLMVSCWNRSNSPFTLDIGDRLAQLVFVPVVQAQFKLVDEFDSSDRGEGGFGHSGTK</sequence>
<keyword id="KW-0378">Hydrolase</keyword>
<keyword id="KW-0460">Magnesium</keyword>
<keyword id="KW-0479">Metal-binding</keyword>
<keyword id="KW-0546">Nucleotide metabolism</keyword>
<proteinExistence type="inferred from homology"/>
<comment type="function">
    <text evidence="1">This enzyme is involved in nucleotide metabolism: it produces dUMP, the immediate precursor of thymidine nucleotides and it decreases the intracellular concentration of dUTP so that uracil cannot be incorporated into DNA.</text>
</comment>
<comment type="catalytic activity">
    <reaction evidence="1">
        <text>dUTP + H2O = dUMP + diphosphate + H(+)</text>
        <dbReference type="Rhea" id="RHEA:10248"/>
        <dbReference type="ChEBI" id="CHEBI:15377"/>
        <dbReference type="ChEBI" id="CHEBI:15378"/>
        <dbReference type="ChEBI" id="CHEBI:33019"/>
        <dbReference type="ChEBI" id="CHEBI:61555"/>
        <dbReference type="ChEBI" id="CHEBI:246422"/>
        <dbReference type="EC" id="3.6.1.23"/>
    </reaction>
</comment>
<comment type="cofactor">
    <cofactor evidence="1">
        <name>Mg(2+)</name>
        <dbReference type="ChEBI" id="CHEBI:18420"/>
    </cofactor>
</comment>
<comment type="pathway">
    <text evidence="1">Pyrimidine metabolism; dUMP biosynthesis; dUMP from dCTP (dUTP route): step 2/2.</text>
</comment>
<comment type="similarity">
    <text evidence="1">Belongs to the dUTPase family.</text>
</comment>
<accession>A4Y2K9</accession>